<feature type="chain" id="PRO_1000136839" description="Probable tRNA pseudouridine synthase D">
    <location>
        <begin position="1"/>
        <end position="434"/>
    </location>
</feature>
<feature type="domain" description="TRUD" evidence="1">
    <location>
        <begin position="169"/>
        <end position="396"/>
    </location>
</feature>
<feature type="active site" description="Nucleophile" evidence="1">
    <location>
        <position position="93"/>
    </location>
</feature>
<keyword id="KW-0413">Isomerase</keyword>
<keyword id="KW-0819">tRNA processing</keyword>
<reference key="1">
    <citation type="journal article" date="2008" name="Genomics">
        <title>Evolution in the laboratory: the genome of Halobacterium salinarum strain R1 compared to that of strain NRC-1.</title>
        <authorList>
            <person name="Pfeiffer F."/>
            <person name="Schuster S.C."/>
            <person name="Broicher A."/>
            <person name="Falb M."/>
            <person name="Palm P."/>
            <person name="Rodewald K."/>
            <person name="Ruepp A."/>
            <person name="Soppa J."/>
            <person name="Tittor J."/>
            <person name="Oesterhelt D."/>
        </authorList>
    </citation>
    <scope>NUCLEOTIDE SEQUENCE [LARGE SCALE GENOMIC DNA]</scope>
    <source>
        <strain>ATCC 29341 / DSM 671 / R1</strain>
    </source>
</reference>
<sequence>MREAHPIERAVGMAYYASDSDGTGGRLRDSPADFRVRELEAFDTQPADAPTGDYPWLVVRATLHEWDTNDFARELANTVGMSRERVRWAGTKDRHAVTTQLFAVRDLDAAQVPEIRNADIEVVGRAGRGLEFGDLAGNAFEIVVRDPDAPERAAAVADELAAFGGGTVGTPNYFGQQRFGSKRPVTHEVGLAILRDDWEAAAMAYLGAPTEHEPADSQRAREYVAETRDWTGALAEFPQRLRYERTMLHELADGGSFRDAVETFPSNLQQLFVHAAQSYVFNRIVSERMARGLPFGEPVAGDVVWFADSDADAAVAQPDAARQQRVTDSRVDVMARHCERGRAFVTAPLVGTDTEFADGDPGEITRGVLDDLGLSRADFDLPGEFDSAGSRRAILLRPDLTVSHDPLAFEFALPSGSYATVVLREFLKPSPLAL</sequence>
<comment type="function">
    <text evidence="1">Could be responsible for synthesis of pseudouridine from uracil-13 in transfer RNAs.</text>
</comment>
<comment type="catalytic activity">
    <reaction evidence="1">
        <text>uridine(13) in tRNA = pseudouridine(13) in tRNA</text>
        <dbReference type="Rhea" id="RHEA:42540"/>
        <dbReference type="Rhea" id="RHEA-COMP:10105"/>
        <dbReference type="Rhea" id="RHEA-COMP:10106"/>
        <dbReference type="ChEBI" id="CHEBI:65314"/>
        <dbReference type="ChEBI" id="CHEBI:65315"/>
        <dbReference type="EC" id="5.4.99.27"/>
    </reaction>
</comment>
<comment type="similarity">
    <text evidence="1">Belongs to the pseudouridine synthase TruD family.</text>
</comment>
<organism>
    <name type="scientific">Halobacterium salinarum (strain ATCC 29341 / DSM 671 / R1)</name>
    <dbReference type="NCBI Taxonomy" id="478009"/>
    <lineage>
        <taxon>Archaea</taxon>
        <taxon>Methanobacteriati</taxon>
        <taxon>Methanobacteriota</taxon>
        <taxon>Stenosarchaea group</taxon>
        <taxon>Halobacteria</taxon>
        <taxon>Halobacteriales</taxon>
        <taxon>Halobacteriaceae</taxon>
        <taxon>Halobacterium</taxon>
        <taxon>Halobacterium salinarum NRC-34001</taxon>
    </lineage>
</organism>
<accession>B0R2Y4</accession>
<protein>
    <recommendedName>
        <fullName evidence="1">Probable tRNA pseudouridine synthase D</fullName>
        <ecNumber evidence="1">5.4.99.27</ecNumber>
    </recommendedName>
    <alternativeName>
        <fullName evidence="1">tRNA pseudouridine(13) synthase</fullName>
    </alternativeName>
    <alternativeName>
        <fullName evidence="1">tRNA pseudouridylate synthase D</fullName>
    </alternativeName>
    <alternativeName>
        <fullName evidence="1">tRNA-uridine isomerase D</fullName>
    </alternativeName>
</protein>
<gene>
    <name evidence="1" type="primary">truD</name>
    <name type="ordered locus">OE_1378R</name>
</gene>
<evidence type="ECO:0000255" key="1">
    <source>
        <dbReference type="HAMAP-Rule" id="MF_01082"/>
    </source>
</evidence>
<dbReference type="EC" id="5.4.99.27" evidence="1"/>
<dbReference type="EMBL" id="AM774415">
    <property type="protein sequence ID" value="CAP13094.1"/>
    <property type="molecule type" value="Genomic_DNA"/>
</dbReference>
<dbReference type="RefSeq" id="WP_010902134.1">
    <property type="nucleotide sequence ID" value="NC_010364.1"/>
</dbReference>
<dbReference type="SMR" id="B0R2Y4"/>
<dbReference type="EnsemblBacteria" id="CAP13094">
    <property type="protein sequence ID" value="CAP13094"/>
    <property type="gene ID" value="OE_1378R"/>
</dbReference>
<dbReference type="GeneID" id="68693206"/>
<dbReference type="KEGG" id="hsl:OE_1378R"/>
<dbReference type="HOGENOM" id="CLU_005281_4_1_2"/>
<dbReference type="PhylomeDB" id="B0R2Y4"/>
<dbReference type="Proteomes" id="UP000001321">
    <property type="component" value="Chromosome"/>
</dbReference>
<dbReference type="GO" id="GO:0003723">
    <property type="term" value="F:RNA binding"/>
    <property type="evidence" value="ECO:0007669"/>
    <property type="project" value="InterPro"/>
</dbReference>
<dbReference type="GO" id="GO:0160150">
    <property type="term" value="F:tRNA pseudouridine(13) synthase activity"/>
    <property type="evidence" value="ECO:0007669"/>
    <property type="project" value="UniProtKB-EC"/>
</dbReference>
<dbReference type="GO" id="GO:0031119">
    <property type="term" value="P:tRNA pseudouridine synthesis"/>
    <property type="evidence" value="ECO:0007669"/>
    <property type="project" value="UniProtKB-UniRule"/>
</dbReference>
<dbReference type="CDD" id="cd02577">
    <property type="entry name" value="PSTD1"/>
    <property type="match status" value="1"/>
</dbReference>
<dbReference type="Gene3D" id="1.10.1510.30">
    <property type="match status" value="1"/>
</dbReference>
<dbReference type="Gene3D" id="3.30.70.3160">
    <property type="match status" value="1"/>
</dbReference>
<dbReference type="Gene3D" id="3.30.2350.20">
    <property type="entry name" value="TruD, catalytic domain"/>
    <property type="match status" value="1"/>
</dbReference>
<dbReference type="HAMAP" id="MF_01082">
    <property type="entry name" value="TruD"/>
    <property type="match status" value="1"/>
</dbReference>
<dbReference type="InterPro" id="IPR020103">
    <property type="entry name" value="PsdUridine_synth_cat_dom_sf"/>
</dbReference>
<dbReference type="InterPro" id="IPR001656">
    <property type="entry name" value="PsdUridine_synth_TruD"/>
</dbReference>
<dbReference type="InterPro" id="IPR020119">
    <property type="entry name" value="PsdUridine_synth_TruD_CS"/>
</dbReference>
<dbReference type="InterPro" id="IPR011760">
    <property type="entry name" value="PsdUridine_synth_TruD_insert"/>
</dbReference>
<dbReference type="InterPro" id="IPR042214">
    <property type="entry name" value="TruD_catalytic"/>
</dbReference>
<dbReference type="NCBIfam" id="NF002158">
    <property type="entry name" value="PRK00984.2-3"/>
    <property type="match status" value="1"/>
</dbReference>
<dbReference type="NCBIfam" id="TIGR00094">
    <property type="entry name" value="tRNA_TruD_broad"/>
    <property type="match status" value="1"/>
</dbReference>
<dbReference type="PANTHER" id="PTHR13326:SF21">
    <property type="entry name" value="PSEUDOURIDYLATE SYNTHASE PUS7L"/>
    <property type="match status" value="1"/>
</dbReference>
<dbReference type="PANTHER" id="PTHR13326">
    <property type="entry name" value="TRNA PSEUDOURIDINE SYNTHASE D"/>
    <property type="match status" value="1"/>
</dbReference>
<dbReference type="Pfam" id="PF01142">
    <property type="entry name" value="TruD"/>
    <property type="match status" value="1"/>
</dbReference>
<dbReference type="PIRSF" id="PIRSF037016">
    <property type="entry name" value="Pseudouridin_synth_euk_prd"/>
    <property type="match status" value="1"/>
</dbReference>
<dbReference type="SUPFAM" id="SSF55120">
    <property type="entry name" value="Pseudouridine synthase"/>
    <property type="match status" value="1"/>
</dbReference>
<dbReference type="PROSITE" id="PS50984">
    <property type="entry name" value="TRUD"/>
    <property type="match status" value="1"/>
</dbReference>
<dbReference type="PROSITE" id="PS01268">
    <property type="entry name" value="UPF0024"/>
    <property type="match status" value="1"/>
</dbReference>
<name>TRUD_HALS3</name>
<proteinExistence type="inferred from homology"/>